<protein>
    <recommendedName>
        <fullName evidence="1">Glutamate-1-semialdehyde 2,1-aminomutase</fullName>
        <shortName evidence="1">GSA</shortName>
        <ecNumber evidence="1">5.4.3.8</ecNumber>
    </recommendedName>
    <alternativeName>
        <fullName evidence="1">Glutamate-1-semialdehyde aminotransferase</fullName>
        <shortName evidence="1">GSA-AT</shortName>
    </alternativeName>
</protein>
<accession>Q2IHP8</accession>
<feature type="chain" id="PRO_0000243534" description="Glutamate-1-semialdehyde 2,1-aminomutase">
    <location>
        <begin position="1"/>
        <end position="430"/>
    </location>
</feature>
<feature type="modified residue" description="N6-(pyridoxal phosphate)lysine" evidence="1">
    <location>
        <position position="267"/>
    </location>
</feature>
<keyword id="KW-0963">Cytoplasm</keyword>
<keyword id="KW-0413">Isomerase</keyword>
<keyword id="KW-0627">Porphyrin biosynthesis</keyword>
<keyword id="KW-0663">Pyridoxal phosphate</keyword>
<keyword id="KW-1185">Reference proteome</keyword>
<reference key="1">
    <citation type="submission" date="2006-01" db="EMBL/GenBank/DDBJ databases">
        <title>Complete sequence of Anaeromyxobacter dehalogenans 2CP-C.</title>
        <authorList>
            <person name="Copeland A."/>
            <person name="Lucas S."/>
            <person name="Lapidus A."/>
            <person name="Barry K."/>
            <person name="Detter J.C."/>
            <person name="Glavina T."/>
            <person name="Hammon N."/>
            <person name="Israni S."/>
            <person name="Pitluck S."/>
            <person name="Brettin T."/>
            <person name="Bruce D."/>
            <person name="Han C."/>
            <person name="Tapia R."/>
            <person name="Gilna P."/>
            <person name="Kiss H."/>
            <person name="Schmutz J."/>
            <person name="Larimer F."/>
            <person name="Land M."/>
            <person name="Kyrpides N."/>
            <person name="Anderson I."/>
            <person name="Sanford R.A."/>
            <person name="Ritalahti K.M."/>
            <person name="Thomas H.S."/>
            <person name="Kirby J.R."/>
            <person name="Zhulin I.B."/>
            <person name="Loeffler F.E."/>
            <person name="Richardson P."/>
        </authorList>
    </citation>
    <scope>NUCLEOTIDE SEQUENCE [LARGE SCALE GENOMIC DNA]</scope>
    <source>
        <strain>2CP-C</strain>
    </source>
</reference>
<dbReference type="EC" id="5.4.3.8" evidence="1"/>
<dbReference type="EMBL" id="CP000251">
    <property type="protein sequence ID" value="ABC84107.1"/>
    <property type="molecule type" value="Genomic_DNA"/>
</dbReference>
<dbReference type="RefSeq" id="WP_011423389.1">
    <property type="nucleotide sequence ID" value="NC_007760.1"/>
</dbReference>
<dbReference type="SMR" id="Q2IHP8"/>
<dbReference type="STRING" id="290397.Adeh_4344"/>
<dbReference type="KEGG" id="ade:Adeh_4344"/>
<dbReference type="eggNOG" id="COG0001">
    <property type="taxonomic scope" value="Bacteria"/>
</dbReference>
<dbReference type="HOGENOM" id="CLU_016922_1_5_7"/>
<dbReference type="OrthoDB" id="9801052at2"/>
<dbReference type="UniPathway" id="UPA00251">
    <property type="reaction ID" value="UER00317"/>
</dbReference>
<dbReference type="Proteomes" id="UP000001935">
    <property type="component" value="Chromosome"/>
</dbReference>
<dbReference type="GO" id="GO:0005737">
    <property type="term" value="C:cytoplasm"/>
    <property type="evidence" value="ECO:0007669"/>
    <property type="project" value="UniProtKB-SubCell"/>
</dbReference>
<dbReference type="GO" id="GO:0042286">
    <property type="term" value="F:glutamate-1-semialdehyde 2,1-aminomutase activity"/>
    <property type="evidence" value="ECO:0007669"/>
    <property type="project" value="UniProtKB-UniRule"/>
</dbReference>
<dbReference type="GO" id="GO:0030170">
    <property type="term" value="F:pyridoxal phosphate binding"/>
    <property type="evidence" value="ECO:0007669"/>
    <property type="project" value="InterPro"/>
</dbReference>
<dbReference type="GO" id="GO:0008483">
    <property type="term" value="F:transaminase activity"/>
    <property type="evidence" value="ECO:0007669"/>
    <property type="project" value="InterPro"/>
</dbReference>
<dbReference type="GO" id="GO:0006782">
    <property type="term" value="P:protoporphyrinogen IX biosynthetic process"/>
    <property type="evidence" value="ECO:0007669"/>
    <property type="project" value="UniProtKB-UniRule"/>
</dbReference>
<dbReference type="CDD" id="cd00610">
    <property type="entry name" value="OAT_like"/>
    <property type="match status" value="1"/>
</dbReference>
<dbReference type="FunFam" id="3.40.640.10:FF:000021">
    <property type="entry name" value="Glutamate-1-semialdehyde 2,1-aminomutase"/>
    <property type="match status" value="1"/>
</dbReference>
<dbReference type="Gene3D" id="3.90.1150.10">
    <property type="entry name" value="Aspartate Aminotransferase, domain 1"/>
    <property type="match status" value="1"/>
</dbReference>
<dbReference type="Gene3D" id="3.40.640.10">
    <property type="entry name" value="Type I PLP-dependent aspartate aminotransferase-like (Major domain)"/>
    <property type="match status" value="1"/>
</dbReference>
<dbReference type="HAMAP" id="MF_00375">
    <property type="entry name" value="HemL_aminotrans_3"/>
    <property type="match status" value="1"/>
</dbReference>
<dbReference type="InterPro" id="IPR004639">
    <property type="entry name" value="4pyrrol_synth_GluAld_NH2Trfase"/>
</dbReference>
<dbReference type="InterPro" id="IPR005814">
    <property type="entry name" value="Aminotrans_3"/>
</dbReference>
<dbReference type="InterPro" id="IPR049704">
    <property type="entry name" value="Aminotrans_3_PPA_site"/>
</dbReference>
<dbReference type="InterPro" id="IPR015424">
    <property type="entry name" value="PyrdxlP-dep_Trfase"/>
</dbReference>
<dbReference type="InterPro" id="IPR015421">
    <property type="entry name" value="PyrdxlP-dep_Trfase_major"/>
</dbReference>
<dbReference type="InterPro" id="IPR015422">
    <property type="entry name" value="PyrdxlP-dep_Trfase_small"/>
</dbReference>
<dbReference type="NCBIfam" id="TIGR00713">
    <property type="entry name" value="hemL"/>
    <property type="match status" value="1"/>
</dbReference>
<dbReference type="NCBIfam" id="NF000818">
    <property type="entry name" value="PRK00062.1"/>
    <property type="match status" value="1"/>
</dbReference>
<dbReference type="PANTHER" id="PTHR43713">
    <property type="entry name" value="GLUTAMATE-1-SEMIALDEHYDE 2,1-AMINOMUTASE"/>
    <property type="match status" value="1"/>
</dbReference>
<dbReference type="PANTHER" id="PTHR43713:SF3">
    <property type="entry name" value="GLUTAMATE-1-SEMIALDEHYDE 2,1-AMINOMUTASE 1, CHLOROPLASTIC-RELATED"/>
    <property type="match status" value="1"/>
</dbReference>
<dbReference type="Pfam" id="PF00202">
    <property type="entry name" value="Aminotran_3"/>
    <property type="match status" value="1"/>
</dbReference>
<dbReference type="SUPFAM" id="SSF53383">
    <property type="entry name" value="PLP-dependent transferases"/>
    <property type="match status" value="1"/>
</dbReference>
<dbReference type="PROSITE" id="PS00600">
    <property type="entry name" value="AA_TRANSFER_CLASS_3"/>
    <property type="match status" value="1"/>
</dbReference>
<sequence length="430" mass="45292">MKTELSQKLFEKANDLFPGGVNSPVRAFKGVGGTPRFIARAKGSHIVDVDGNDYVDYVLSWGPMIVGHCHPEVMRAVQDAMKEGSSFGAPSPREILLAELVRERMPWVEKMRFVSSGTEATTSAIRVARGFTGRDDIVKFDGCYHGAGDPLLVKAGSGVETLGLPDSPGVPADVARHTLTAPYNDLPALEKVFEAKGASIAAVILEPVVGNMGVLVPRPGFLQGVHDLCKKHGALFIVDEVMTGFRLSSGGACGLYGLRPDLVTFGKVIGAGLPVGAFGGRRDVMDRVAPAGPIYQAGTLSGNPMAMAAGHAALKLMTEAAYRKLETLSAALADGLSAAAAEAKVPVQVNRVGSMLTVFFSHKPVFDAATARACNTRRFGAFFHAMLEHGAYLPPSQFEAAFLSTAHTDDDVARTVAAARVAFAEAAKVA</sequence>
<comment type="catalytic activity">
    <reaction evidence="1">
        <text>(S)-4-amino-5-oxopentanoate = 5-aminolevulinate</text>
        <dbReference type="Rhea" id="RHEA:14265"/>
        <dbReference type="ChEBI" id="CHEBI:57501"/>
        <dbReference type="ChEBI" id="CHEBI:356416"/>
        <dbReference type="EC" id="5.4.3.8"/>
    </reaction>
</comment>
<comment type="cofactor">
    <cofactor evidence="1">
        <name>pyridoxal 5'-phosphate</name>
        <dbReference type="ChEBI" id="CHEBI:597326"/>
    </cofactor>
</comment>
<comment type="pathway">
    <text evidence="1">Porphyrin-containing compound metabolism; protoporphyrin-IX biosynthesis; 5-aminolevulinate from L-glutamyl-tRNA(Glu): step 2/2.</text>
</comment>
<comment type="subunit">
    <text evidence="1">Homodimer.</text>
</comment>
<comment type="subcellular location">
    <subcellularLocation>
        <location evidence="1">Cytoplasm</location>
    </subcellularLocation>
</comment>
<comment type="similarity">
    <text evidence="1">Belongs to the class-III pyridoxal-phosphate-dependent aminotransferase family. HemL subfamily.</text>
</comment>
<evidence type="ECO:0000255" key="1">
    <source>
        <dbReference type="HAMAP-Rule" id="MF_00375"/>
    </source>
</evidence>
<name>GSA_ANADE</name>
<organism>
    <name type="scientific">Anaeromyxobacter dehalogenans (strain 2CP-C)</name>
    <dbReference type="NCBI Taxonomy" id="290397"/>
    <lineage>
        <taxon>Bacteria</taxon>
        <taxon>Pseudomonadati</taxon>
        <taxon>Myxococcota</taxon>
        <taxon>Myxococcia</taxon>
        <taxon>Myxococcales</taxon>
        <taxon>Cystobacterineae</taxon>
        <taxon>Anaeromyxobacteraceae</taxon>
        <taxon>Anaeromyxobacter</taxon>
    </lineage>
</organism>
<gene>
    <name evidence="1" type="primary">hemL</name>
    <name type="ordered locus">Adeh_4344</name>
</gene>
<proteinExistence type="inferred from homology"/>